<keyword id="KW-0067">ATP-binding</keyword>
<keyword id="KW-0963">Cytoplasm</keyword>
<keyword id="KW-0436">Ligase</keyword>
<keyword id="KW-0547">Nucleotide-binding</keyword>
<feature type="chain" id="PRO_1000148119" description="Lipoate-protein ligase A">
    <location>
        <begin position="1"/>
        <end position="338"/>
    </location>
</feature>
<feature type="domain" description="BPL/LPL catalytic" evidence="2">
    <location>
        <begin position="29"/>
        <end position="216"/>
    </location>
</feature>
<feature type="binding site" evidence="1">
    <location>
        <position position="71"/>
    </location>
    <ligand>
        <name>ATP</name>
        <dbReference type="ChEBI" id="CHEBI:30616"/>
    </ligand>
</feature>
<feature type="binding site" evidence="1">
    <location>
        <begin position="76"/>
        <end position="79"/>
    </location>
    <ligand>
        <name>ATP</name>
        <dbReference type="ChEBI" id="CHEBI:30616"/>
    </ligand>
</feature>
<feature type="binding site" evidence="1">
    <location>
        <position position="134"/>
    </location>
    <ligand>
        <name>(R)-lipoate</name>
        <dbReference type="ChEBI" id="CHEBI:83088"/>
    </ligand>
</feature>
<feature type="binding site" evidence="1">
    <location>
        <position position="134"/>
    </location>
    <ligand>
        <name>ATP</name>
        <dbReference type="ChEBI" id="CHEBI:30616"/>
    </ligand>
</feature>
<organism>
    <name type="scientific">Yersinia pseudotuberculosis serotype IB (strain PB1/+)</name>
    <dbReference type="NCBI Taxonomy" id="502801"/>
    <lineage>
        <taxon>Bacteria</taxon>
        <taxon>Pseudomonadati</taxon>
        <taxon>Pseudomonadota</taxon>
        <taxon>Gammaproteobacteria</taxon>
        <taxon>Enterobacterales</taxon>
        <taxon>Yersiniaceae</taxon>
        <taxon>Yersinia</taxon>
    </lineage>
</organism>
<dbReference type="EC" id="6.3.1.20" evidence="1"/>
<dbReference type="EMBL" id="CP001048">
    <property type="protein sequence ID" value="ACC89358.1"/>
    <property type="molecule type" value="Genomic_DNA"/>
</dbReference>
<dbReference type="RefSeq" id="WP_011192540.1">
    <property type="nucleotide sequence ID" value="NZ_CP009780.1"/>
</dbReference>
<dbReference type="SMR" id="B2K5K7"/>
<dbReference type="KEGG" id="ypb:YPTS_2397"/>
<dbReference type="PATRIC" id="fig|502801.10.peg.1802"/>
<dbReference type="UniPathway" id="UPA00537">
    <property type="reaction ID" value="UER00594"/>
</dbReference>
<dbReference type="UniPathway" id="UPA00537">
    <property type="reaction ID" value="UER00595"/>
</dbReference>
<dbReference type="GO" id="GO:0005829">
    <property type="term" value="C:cytosol"/>
    <property type="evidence" value="ECO:0007669"/>
    <property type="project" value="TreeGrafter"/>
</dbReference>
<dbReference type="GO" id="GO:0005524">
    <property type="term" value="F:ATP binding"/>
    <property type="evidence" value="ECO:0007669"/>
    <property type="project" value="UniProtKB-KW"/>
</dbReference>
<dbReference type="GO" id="GO:0016979">
    <property type="term" value="F:lipoate-protein ligase activity"/>
    <property type="evidence" value="ECO:0007669"/>
    <property type="project" value="UniProtKB-UniRule"/>
</dbReference>
<dbReference type="GO" id="GO:0017118">
    <property type="term" value="F:lipoyltransferase activity"/>
    <property type="evidence" value="ECO:0007669"/>
    <property type="project" value="TreeGrafter"/>
</dbReference>
<dbReference type="GO" id="GO:0036211">
    <property type="term" value="P:protein modification process"/>
    <property type="evidence" value="ECO:0007669"/>
    <property type="project" value="InterPro"/>
</dbReference>
<dbReference type="CDD" id="cd16443">
    <property type="entry name" value="LplA"/>
    <property type="match status" value="1"/>
</dbReference>
<dbReference type="FunFam" id="3.30.930.10:FF:000024">
    <property type="entry name" value="Lipoate-protein ligase A"/>
    <property type="match status" value="1"/>
</dbReference>
<dbReference type="Gene3D" id="3.30.930.10">
    <property type="entry name" value="Bira Bifunctional Protein, Domain 2"/>
    <property type="match status" value="1"/>
</dbReference>
<dbReference type="Gene3D" id="3.30.390.50">
    <property type="entry name" value="CO dehydrogenase flavoprotein, C-terminal domain"/>
    <property type="match status" value="1"/>
</dbReference>
<dbReference type="HAMAP" id="MF_01602">
    <property type="entry name" value="LplA"/>
    <property type="match status" value="1"/>
</dbReference>
<dbReference type="InterPro" id="IPR045864">
    <property type="entry name" value="aa-tRNA-synth_II/BPL/LPL"/>
</dbReference>
<dbReference type="InterPro" id="IPR004143">
    <property type="entry name" value="BPL_LPL_catalytic"/>
</dbReference>
<dbReference type="InterPro" id="IPR023741">
    <property type="entry name" value="Lipoate_ligase_A"/>
</dbReference>
<dbReference type="InterPro" id="IPR019491">
    <property type="entry name" value="Lipoate_protein_ligase_C"/>
</dbReference>
<dbReference type="InterPro" id="IPR004562">
    <property type="entry name" value="LipoylTrfase_LipoateP_Ligase"/>
</dbReference>
<dbReference type="NCBIfam" id="TIGR00545">
    <property type="entry name" value="lipoyltrans"/>
    <property type="match status" value="1"/>
</dbReference>
<dbReference type="PANTHER" id="PTHR12561">
    <property type="entry name" value="LIPOATE-PROTEIN LIGASE"/>
    <property type="match status" value="1"/>
</dbReference>
<dbReference type="PANTHER" id="PTHR12561:SF3">
    <property type="entry name" value="LIPOYLTRANSFERASE 1, MITOCHONDRIAL"/>
    <property type="match status" value="1"/>
</dbReference>
<dbReference type="Pfam" id="PF10437">
    <property type="entry name" value="Lip_prot_lig_C"/>
    <property type="match status" value="1"/>
</dbReference>
<dbReference type="Pfam" id="PF21948">
    <property type="entry name" value="LplA-B_cat"/>
    <property type="match status" value="1"/>
</dbReference>
<dbReference type="SUPFAM" id="SSF55681">
    <property type="entry name" value="Class II aaRS and biotin synthetases"/>
    <property type="match status" value="1"/>
</dbReference>
<dbReference type="SUPFAM" id="SSF82649">
    <property type="entry name" value="SufE/NifU"/>
    <property type="match status" value="1"/>
</dbReference>
<dbReference type="PROSITE" id="PS51733">
    <property type="entry name" value="BPL_LPL_CATALYTIC"/>
    <property type="match status" value="1"/>
</dbReference>
<name>LPLA_YERPB</name>
<protein>
    <recommendedName>
        <fullName evidence="1">Lipoate-protein ligase A</fullName>
        <ecNumber evidence="1">6.3.1.20</ecNumber>
    </recommendedName>
    <alternativeName>
        <fullName evidence="1">Lipoate--protein ligase</fullName>
    </alternativeName>
</protein>
<gene>
    <name evidence="1" type="primary">lplA</name>
    <name type="ordered locus">YPTS_2397</name>
</gene>
<proteinExistence type="inferred from homology"/>
<comment type="function">
    <text evidence="1">Catalyzes both the ATP-dependent activation of exogenously supplied lipoate to lipoyl-AMP and the transfer of the activated lipoyl onto the lipoyl domains of lipoate-dependent enzymes.</text>
</comment>
<comment type="catalytic activity">
    <reaction evidence="1">
        <text>L-lysyl-[lipoyl-carrier protein] + (R)-lipoate + ATP = N(6)-[(R)-lipoyl]-L-lysyl-[lipoyl-carrier protein] + AMP + diphosphate + H(+)</text>
        <dbReference type="Rhea" id="RHEA:49288"/>
        <dbReference type="Rhea" id="RHEA-COMP:10500"/>
        <dbReference type="Rhea" id="RHEA-COMP:10502"/>
        <dbReference type="ChEBI" id="CHEBI:15378"/>
        <dbReference type="ChEBI" id="CHEBI:29969"/>
        <dbReference type="ChEBI" id="CHEBI:30616"/>
        <dbReference type="ChEBI" id="CHEBI:33019"/>
        <dbReference type="ChEBI" id="CHEBI:83088"/>
        <dbReference type="ChEBI" id="CHEBI:83099"/>
        <dbReference type="ChEBI" id="CHEBI:456215"/>
        <dbReference type="EC" id="6.3.1.20"/>
    </reaction>
</comment>
<comment type="pathway">
    <text evidence="1">Protein modification; protein lipoylation via exogenous pathway; protein N(6)-(lipoyl)lysine from lipoate: step 1/2.</text>
</comment>
<comment type="pathway">
    <text evidence="1">Protein modification; protein lipoylation via exogenous pathway; protein N(6)-(lipoyl)lysine from lipoate: step 2/2.</text>
</comment>
<comment type="subunit">
    <text evidence="1">Monomer.</text>
</comment>
<comment type="subcellular location">
    <subcellularLocation>
        <location evidence="1">Cytoplasm</location>
    </subcellularLocation>
</comment>
<comment type="miscellaneous">
    <text evidence="1">In the transfer reaction, the free carboxyl group of lipoic acid is attached via an amide linkage to the epsilon-amino group of a specific lysine residue of lipoyl domains of lipoate-dependent enzymes.</text>
</comment>
<comment type="similarity">
    <text evidence="1">Belongs to the LplA family.</text>
</comment>
<reference key="1">
    <citation type="submission" date="2008-04" db="EMBL/GenBank/DDBJ databases">
        <title>Complete sequence of Yersinia pseudotuberculosis PB1/+.</title>
        <authorList>
            <person name="Copeland A."/>
            <person name="Lucas S."/>
            <person name="Lapidus A."/>
            <person name="Glavina del Rio T."/>
            <person name="Dalin E."/>
            <person name="Tice H."/>
            <person name="Bruce D."/>
            <person name="Goodwin L."/>
            <person name="Pitluck S."/>
            <person name="Munk A.C."/>
            <person name="Brettin T."/>
            <person name="Detter J.C."/>
            <person name="Han C."/>
            <person name="Tapia R."/>
            <person name="Schmutz J."/>
            <person name="Larimer F."/>
            <person name="Land M."/>
            <person name="Hauser L."/>
            <person name="Challacombe J.F."/>
            <person name="Green L."/>
            <person name="Lindler L.E."/>
            <person name="Nikolich M.P."/>
            <person name="Richardson P."/>
        </authorList>
    </citation>
    <scope>NUCLEOTIDE SEQUENCE [LARGE SCALE GENOMIC DNA]</scope>
    <source>
        <strain>PB1/+</strain>
    </source>
</reference>
<accession>B2K5K7</accession>
<sequence length="338" mass="38055">MSSLRLLISDSYDPWFNLAVEECIFRQMSPDQRVLFLWRNADTVVIGRAQNPWKECNTRRMEQDGVKLARRSSGGGAVFHDLGNTCFTFMAGKPGYDKTISTQIILNALASLGIQATASGRNDLVVINGEDERKVSGSAYKETKDRGFHHGTLLLNADLSRLADYLNPDPKKLQAKGITSVRSRVTNLVELLPGIDHEKIRTAIEQAFFAYYDEQVSAEVISPQSLPNLPGFTEQFAKQSSWEWNFGQAPAFSHVVDTRFTWGGIELHFDVLHGAIDRCQIFTDSLNPTPLEALAQRLQGAAYRPDAIDKICQHWIDDFPELQTELQQACHWLVEVLR</sequence>
<evidence type="ECO:0000255" key="1">
    <source>
        <dbReference type="HAMAP-Rule" id="MF_01602"/>
    </source>
</evidence>
<evidence type="ECO:0000255" key="2">
    <source>
        <dbReference type="PROSITE-ProRule" id="PRU01067"/>
    </source>
</evidence>